<dbReference type="EMBL" id="AF038898">
    <property type="protein sequence ID" value="AAD02107.1"/>
    <property type="molecule type" value="mRNA"/>
</dbReference>
<dbReference type="EMBL" id="AF044309">
    <property type="protein sequence ID" value="AAC24031.1"/>
    <property type="molecule type" value="mRNA"/>
</dbReference>
<dbReference type="EMBL" id="AF071504">
    <property type="protein sequence ID" value="AAC24004.1"/>
    <property type="molecule type" value="mRNA"/>
</dbReference>
<dbReference type="EMBL" id="AL135917">
    <property type="status" value="NOT_ANNOTATED_CDS"/>
    <property type="molecule type" value="Genomic_DNA"/>
</dbReference>
<dbReference type="EMBL" id="CH471051">
    <property type="protein sequence ID" value="EAW47849.1"/>
    <property type="molecule type" value="Genomic_DNA"/>
</dbReference>
<dbReference type="EMBL" id="CH471051">
    <property type="protein sequence ID" value="EAW47850.1"/>
    <property type="molecule type" value="Genomic_DNA"/>
</dbReference>
<dbReference type="EMBL" id="BC033519">
    <property type="protein sequence ID" value="AAH33519.1"/>
    <property type="molecule type" value="mRNA"/>
</dbReference>
<dbReference type="CCDS" id="CCDS5205.1"/>
<dbReference type="PIR" id="JE0094">
    <property type="entry name" value="JE0094"/>
</dbReference>
<dbReference type="RefSeq" id="NP_003755.2">
    <property type="nucleotide sequence ID" value="NM_003764.3"/>
</dbReference>
<dbReference type="RefSeq" id="XP_011534516.1">
    <property type="nucleotide sequence ID" value="XM_011536214.3"/>
</dbReference>
<dbReference type="RefSeq" id="XP_011534519.1">
    <property type="nucleotide sequence ID" value="XM_011536217.3"/>
</dbReference>
<dbReference type="RefSeq" id="XP_011534520.1">
    <property type="nucleotide sequence ID" value="XM_011536218.3"/>
</dbReference>
<dbReference type="RefSeq" id="XP_016866889.1">
    <property type="nucleotide sequence ID" value="XM_017011400.1"/>
</dbReference>
<dbReference type="RefSeq" id="XP_047275393.1">
    <property type="nucleotide sequence ID" value="XM_047419437.1"/>
</dbReference>
<dbReference type="RefSeq" id="XP_047275394.1">
    <property type="nucleotide sequence ID" value="XM_047419438.1"/>
</dbReference>
<dbReference type="RefSeq" id="XP_047275395.1">
    <property type="nucleotide sequence ID" value="XM_047419439.1"/>
</dbReference>
<dbReference type="RefSeq" id="XP_047275396.1">
    <property type="nucleotide sequence ID" value="XM_047419440.1"/>
</dbReference>
<dbReference type="RefSeq" id="XP_047275397.1">
    <property type="nucleotide sequence ID" value="XM_047419441.1"/>
</dbReference>
<dbReference type="RefSeq" id="XP_054212613.1">
    <property type="nucleotide sequence ID" value="XM_054356638.1"/>
</dbReference>
<dbReference type="RefSeq" id="XP_054212614.1">
    <property type="nucleotide sequence ID" value="XM_054356639.1"/>
</dbReference>
<dbReference type="RefSeq" id="XP_054212615.1">
    <property type="nucleotide sequence ID" value="XM_054356640.1"/>
</dbReference>
<dbReference type="RefSeq" id="XP_054212616.1">
    <property type="nucleotide sequence ID" value="XM_054356641.1"/>
</dbReference>
<dbReference type="RefSeq" id="XP_054212617.1">
    <property type="nucleotide sequence ID" value="XM_054356642.1"/>
</dbReference>
<dbReference type="RefSeq" id="XP_054212618.1">
    <property type="nucleotide sequence ID" value="XM_054356643.1"/>
</dbReference>
<dbReference type="RefSeq" id="XP_054212619.1">
    <property type="nucleotide sequence ID" value="XM_054356644.1"/>
</dbReference>
<dbReference type="SMR" id="O75558"/>
<dbReference type="BioGRID" id="114224">
    <property type="interactions" value="148"/>
</dbReference>
<dbReference type="CORUM" id="O75558"/>
<dbReference type="FunCoup" id="O75558">
    <property type="interactions" value="407"/>
</dbReference>
<dbReference type="IntAct" id="O75558">
    <property type="interactions" value="159"/>
</dbReference>
<dbReference type="MINT" id="O75558"/>
<dbReference type="STRING" id="9606.ENSP00000356540"/>
<dbReference type="iPTMnet" id="O75558"/>
<dbReference type="PhosphoSitePlus" id="O75558"/>
<dbReference type="SwissPalm" id="O75558"/>
<dbReference type="BioMuta" id="STX11"/>
<dbReference type="OGP" id="O75558"/>
<dbReference type="jPOST" id="O75558"/>
<dbReference type="MassIVE" id="O75558"/>
<dbReference type="PaxDb" id="9606-ENSP00000356540"/>
<dbReference type="PeptideAtlas" id="O75558"/>
<dbReference type="ProteomicsDB" id="50085"/>
<dbReference type="Pumba" id="O75558"/>
<dbReference type="Antibodypedia" id="714">
    <property type="antibodies" value="190 antibodies from 27 providers"/>
</dbReference>
<dbReference type="DNASU" id="8676"/>
<dbReference type="Ensembl" id="ENST00000367568.5">
    <property type="protein sequence ID" value="ENSP00000356540.4"/>
    <property type="gene ID" value="ENSG00000135604.11"/>
</dbReference>
<dbReference type="Ensembl" id="ENST00000698355.1">
    <property type="protein sequence ID" value="ENSP00000513678.1"/>
    <property type="gene ID" value="ENSG00000135604.11"/>
</dbReference>
<dbReference type="Ensembl" id="ENST00000698356.1">
    <property type="protein sequence ID" value="ENSP00000513679.1"/>
    <property type="gene ID" value="ENSG00000135604.11"/>
</dbReference>
<dbReference type="Ensembl" id="ENST00000698357.1">
    <property type="protein sequence ID" value="ENSP00000513680.1"/>
    <property type="gene ID" value="ENSG00000135604.11"/>
</dbReference>
<dbReference type="GeneID" id="8676"/>
<dbReference type="KEGG" id="hsa:8676"/>
<dbReference type="MANE-Select" id="ENST00000367568.5">
    <property type="protein sequence ID" value="ENSP00000356540.4"/>
    <property type="RefSeq nucleotide sequence ID" value="NM_003764.4"/>
    <property type="RefSeq protein sequence ID" value="NP_003755.2"/>
</dbReference>
<dbReference type="UCSC" id="uc003qks.5">
    <property type="organism name" value="human"/>
</dbReference>
<dbReference type="AGR" id="HGNC:11429"/>
<dbReference type="CTD" id="8676"/>
<dbReference type="DisGeNET" id="8676"/>
<dbReference type="GeneCards" id="STX11"/>
<dbReference type="GeneReviews" id="STX11"/>
<dbReference type="HGNC" id="HGNC:11429">
    <property type="gene designation" value="STX11"/>
</dbReference>
<dbReference type="HPA" id="ENSG00000135604">
    <property type="expression patterns" value="Tissue enriched (bone)"/>
</dbReference>
<dbReference type="MalaCards" id="STX11"/>
<dbReference type="MIM" id="603552">
    <property type="type" value="phenotype"/>
</dbReference>
<dbReference type="MIM" id="605014">
    <property type="type" value="gene"/>
</dbReference>
<dbReference type="neXtProt" id="NX_O75558"/>
<dbReference type="OpenTargets" id="ENSG00000135604"/>
<dbReference type="Orphanet" id="540">
    <property type="disease" value="Familial hemophagocytic lymphohistiocytosis"/>
</dbReference>
<dbReference type="PharmGKB" id="PA36229"/>
<dbReference type="VEuPathDB" id="HostDB:ENSG00000135604"/>
<dbReference type="eggNOG" id="KOG0810">
    <property type="taxonomic scope" value="Eukaryota"/>
</dbReference>
<dbReference type="GeneTree" id="ENSGT01050000244948"/>
<dbReference type="HOGENOM" id="CLU_042423_2_0_1"/>
<dbReference type="InParanoid" id="O75558"/>
<dbReference type="OMA" id="QEAMFEY"/>
<dbReference type="OrthoDB" id="10255013at2759"/>
<dbReference type="PAN-GO" id="O75558">
    <property type="GO annotations" value="12 GO annotations based on evolutionary models"/>
</dbReference>
<dbReference type="PhylomeDB" id="O75558"/>
<dbReference type="TreeFam" id="TF313763"/>
<dbReference type="PathwayCommons" id="O75558"/>
<dbReference type="SignaLink" id="O75558"/>
<dbReference type="SIGNOR" id="O75558"/>
<dbReference type="BioGRID-ORCS" id="8676">
    <property type="hits" value="8 hits in 1149 CRISPR screens"/>
</dbReference>
<dbReference type="GeneWiki" id="STX11"/>
<dbReference type="GenomeRNAi" id="8676"/>
<dbReference type="Pharos" id="O75558">
    <property type="development level" value="Tbio"/>
</dbReference>
<dbReference type="PRO" id="PR:O75558"/>
<dbReference type="Proteomes" id="UP000005640">
    <property type="component" value="Chromosome 6"/>
</dbReference>
<dbReference type="RNAct" id="O75558">
    <property type="molecule type" value="protein"/>
</dbReference>
<dbReference type="Bgee" id="ENSG00000135604">
    <property type="expression patterns" value="Expressed in monocyte and 126 other cell types or tissues"/>
</dbReference>
<dbReference type="GO" id="GO:0012505">
    <property type="term" value="C:endomembrane system"/>
    <property type="evidence" value="ECO:0000318"/>
    <property type="project" value="GO_Central"/>
</dbReference>
<dbReference type="GO" id="GO:0005794">
    <property type="term" value="C:Golgi apparatus"/>
    <property type="evidence" value="ECO:0007669"/>
    <property type="project" value="UniProtKB-SubCell"/>
</dbReference>
<dbReference type="GO" id="GO:0005886">
    <property type="term" value="C:plasma membrane"/>
    <property type="evidence" value="ECO:0000318"/>
    <property type="project" value="GO_Central"/>
</dbReference>
<dbReference type="GO" id="GO:0048787">
    <property type="term" value="C:presynaptic active zone membrane"/>
    <property type="evidence" value="ECO:0000318"/>
    <property type="project" value="GO_Central"/>
</dbReference>
<dbReference type="GO" id="GO:0031201">
    <property type="term" value="C:SNARE complex"/>
    <property type="evidence" value="ECO:0000318"/>
    <property type="project" value="GO_Central"/>
</dbReference>
<dbReference type="GO" id="GO:0005484">
    <property type="term" value="F:SNAP receptor activity"/>
    <property type="evidence" value="ECO:0000318"/>
    <property type="project" value="GO_Central"/>
</dbReference>
<dbReference type="GO" id="GO:0000149">
    <property type="term" value="F:SNARE binding"/>
    <property type="evidence" value="ECO:0000318"/>
    <property type="project" value="GO_Central"/>
</dbReference>
<dbReference type="GO" id="GO:0006887">
    <property type="term" value="P:exocytosis"/>
    <property type="evidence" value="ECO:0000318"/>
    <property type="project" value="GO_Central"/>
</dbReference>
<dbReference type="GO" id="GO:0006886">
    <property type="term" value="P:intracellular protein transport"/>
    <property type="evidence" value="ECO:0000318"/>
    <property type="project" value="GO_Central"/>
</dbReference>
<dbReference type="GO" id="GO:0061025">
    <property type="term" value="P:membrane fusion"/>
    <property type="evidence" value="ECO:0000304"/>
    <property type="project" value="ProtInc"/>
</dbReference>
<dbReference type="GO" id="GO:0031629">
    <property type="term" value="P:synaptic vesicle fusion to presynaptic active zone membrane"/>
    <property type="evidence" value="ECO:0000318"/>
    <property type="project" value="GO_Central"/>
</dbReference>
<dbReference type="GO" id="GO:0048278">
    <property type="term" value="P:vesicle docking"/>
    <property type="evidence" value="ECO:0000318"/>
    <property type="project" value="GO_Central"/>
</dbReference>
<dbReference type="CDD" id="cd15878">
    <property type="entry name" value="SNARE_syntaxin11"/>
    <property type="match status" value="1"/>
</dbReference>
<dbReference type="CDD" id="cd00179">
    <property type="entry name" value="SynN"/>
    <property type="match status" value="1"/>
</dbReference>
<dbReference type="FunFam" id="1.20.58.70:FF:000015">
    <property type="entry name" value="Syntaxin 11"/>
    <property type="match status" value="1"/>
</dbReference>
<dbReference type="FunFam" id="1.20.5.110:FF:000022">
    <property type="entry name" value="Syntaxin 19"/>
    <property type="match status" value="1"/>
</dbReference>
<dbReference type="Gene3D" id="1.20.5.110">
    <property type="match status" value="1"/>
</dbReference>
<dbReference type="Gene3D" id="1.20.58.70">
    <property type="match status" value="1"/>
</dbReference>
<dbReference type="InterPro" id="IPR010989">
    <property type="entry name" value="SNARE"/>
</dbReference>
<dbReference type="InterPro" id="IPR045242">
    <property type="entry name" value="Syntaxin"/>
</dbReference>
<dbReference type="InterPro" id="IPR006012">
    <property type="entry name" value="Syntaxin/epimorphin_CS"/>
</dbReference>
<dbReference type="InterPro" id="IPR042781">
    <property type="entry name" value="Syntaxin11_SNARE"/>
</dbReference>
<dbReference type="InterPro" id="IPR006011">
    <property type="entry name" value="Syntaxin_N"/>
</dbReference>
<dbReference type="InterPro" id="IPR000727">
    <property type="entry name" value="T_SNARE_dom"/>
</dbReference>
<dbReference type="PANTHER" id="PTHR19957">
    <property type="entry name" value="SYNTAXIN"/>
    <property type="match status" value="1"/>
</dbReference>
<dbReference type="PANTHER" id="PTHR19957:SF30">
    <property type="entry name" value="SYNTAXIN-11"/>
    <property type="match status" value="1"/>
</dbReference>
<dbReference type="Pfam" id="PF00804">
    <property type="entry name" value="Syntaxin"/>
    <property type="match status" value="1"/>
</dbReference>
<dbReference type="SMART" id="SM00503">
    <property type="entry name" value="SynN"/>
    <property type="match status" value="1"/>
</dbReference>
<dbReference type="SMART" id="SM00397">
    <property type="entry name" value="t_SNARE"/>
    <property type="match status" value="1"/>
</dbReference>
<dbReference type="SUPFAM" id="SSF47661">
    <property type="entry name" value="t-snare proteins"/>
    <property type="match status" value="1"/>
</dbReference>
<dbReference type="PROSITE" id="PS00914">
    <property type="entry name" value="SYNTAXIN"/>
    <property type="match status" value="1"/>
</dbReference>
<dbReference type="PROSITE" id="PS50192">
    <property type="entry name" value="T_SNARE"/>
    <property type="match status" value="1"/>
</dbReference>
<evidence type="ECO:0000250" key="1"/>
<evidence type="ECO:0000255" key="2"/>
<evidence type="ECO:0000255" key="3">
    <source>
        <dbReference type="PROSITE-ProRule" id="PRU00202"/>
    </source>
</evidence>
<evidence type="ECO:0000269" key="4">
    <source>
    </source>
</evidence>
<evidence type="ECO:0000305" key="5"/>
<organism>
    <name type="scientific">Homo sapiens</name>
    <name type="common">Human</name>
    <dbReference type="NCBI Taxonomy" id="9606"/>
    <lineage>
        <taxon>Eukaryota</taxon>
        <taxon>Metazoa</taxon>
        <taxon>Chordata</taxon>
        <taxon>Craniata</taxon>
        <taxon>Vertebrata</taxon>
        <taxon>Euteleostomi</taxon>
        <taxon>Mammalia</taxon>
        <taxon>Eutheria</taxon>
        <taxon>Euarchontoglires</taxon>
        <taxon>Primates</taxon>
        <taxon>Haplorrhini</taxon>
        <taxon>Catarrhini</taxon>
        <taxon>Hominidae</taxon>
        <taxon>Homo</taxon>
    </lineage>
</organism>
<proteinExistence type="evidence at protein level"/>
<reference key="1">
    <citation type="journal article" date="1998" name="Biochem. Biophys. Res. Commun.">
        <title>Syntaxin 11: a member of the syntaxin family without a carboxyl terminal transmembrane domain.</title>
        <authorList>
            <person name="Tang B.L."/>
            <person name="Low D.Y.H."/>
            <person name="Hong W."/>
        </authorList>
    </citation>
    <scope>NUCLEOTIDE SEQUENCE [MRNA]</scope>
</reference>
<reference key="2">
    <citation type="journal article" date="1998" name="J. Biol. Chem.">
        <title>Seven novel mammalian SNARE proteins localize to distinct membrane compartments.</title>
        <authorList>
            <person name="Advani R.J."/>
            <person name="Bae H.-R."/>
            <person name="Bock J.B."/>
            <person name="Chao D.S."/>
            <person name="Doung Y.-C."/>
            <person name="Prekeris R."/>
            <person name="Yoo J.-S."/>
            <person name="Scheller R.H."/>
        </authorList>
    </citation>
    <scope>NUCLEOTIDE SEQUENCE [MRNA]</scope>
</reference>
<reference key="3">
    <citation type="journal article" date="1999" name="J. Cell Sci.">
        <title>Syntaxin 11 is associated with SNAP-23 on late endosomes and the trans-Golgi network.</title>
        <authorList>
            <person name="Valdez A.C."/>
            <person name="Cabaniols J.-P."/>
            <person name="Brown M.J."/>
            <person name="Roche P.A."/>
        </authorList>
    </citation>
    <scope>NUCLEOTIDE SEQUENCE [MRNA]</scope>
    <source>
        <tissue>Placenta</tissue>
    </source>
</reference>
<reference key="4">
    <citation type="journal article" date="2003" name="Nature">
        <title>The DNA sequence and analysis of human chromosome 6.</title>
        <authorList>
            <person name="Mungall A.J."/>
            <person name="Palmer S.A."/>
            <person name="Sims S.K."/>
            <person name="Edwards C.A."/>
            <person name="Ashurst J.L."/>
            <person name="Wilming L."/>
            <person name="Jones M.C."/>
            <person name="Horton R."/>
            <person name="Hunt S.E."/>
            <person name="Scott C.E."/>
            <person name="Gilbert J.G.R."/>
            <person name="Clamp M.E."/>
            <person name="Bethel G."/>
            <person name="Milne S."/>
            <person name="Ainscough R."/>
            <person name="Almeida J.P."/>
            <person name="Ambrose K.D."/>
            <person name="Andrews T.D."/>
            <person name="Ashwell R.I.S."/>
            <person name="Babbage A.K."/>
            <person name="Bagguley C.L."/>
            <person name="Bailey J."/>
            <person name="Banerjee R."/>
            <person name="Barker D.J."/>
            <person name="Barlow K.F."/>
            <person name="Bates K."/>
            <person name="Beare D.M."/>
            <person name="Beasley H."/>
            <person name="Beasley O."/>
            <person name="Bird C.P."/>
            <person name="Blakey S.E."/>
            <person name="Bray-Allen S."/>
            <person name="Brook J."/>
            <person name="Brown A.J."/>
            <person name="Brown J.Y."/>
            <person name="Burford D.C."/>
            <person name="Burrill W."/>
            <person name="Burton J."/>
            <person name="Carder C."/>
            <person name="Carter N.P."/>
            <person name="Chapman J.C."/>
            <person name="Clark S.Y."/>
            <person name="Clark G."/>
            <person name="Clee C.M."/>
            <person name="Clegg S."/>
            <person name="Cobley V."/>
            <person name="Collier R.E."/>
            <person name="Collins J.E."/>
            <person name="Colman L.K."/>
            <person name="Corby N.R."/>
            <person name="Coville G.J."/>
            <person name="Culley K.M."/>
            <person name="Dhami P."/>
            <person name="Davies J."/>
            <person name="Dunn M."/>
            <person name="Earthrowl M.E."/>
            <person name="Ellington A.E."/>
            <person name="Evans K.A."/>
            <person name="Faulkner L."/>
            <person name="Francis M.D."/>
            <person name="Frankish A."/>
            <person name="Frankland J."/>
            <person name="French L."/>
            <person name="Garner P."/>
            <person name="Garnett J."/>
            <person name="Ghori M.J."/>
            <person name="Gilby L.M."/>
            <person name="Gillson C.J."/>
            <person name="Glithero R.J."/>
            <person name="Grafham D.V."/>
            <person name="Grant M."/>
            <person name="Gribble S."/>
            <person name="Griffiths C."/>
            <person name="Griffiths M.N.D."/>
            <person name="Hall R."/>
            <person name="Halls K.S."/>
            <person name="Hammond S."/>
            <person name="Harley J.L."/>
            <person name="Hart E.A."/>
            <person name="Heath P.D."/>
            <person name="Heathcott R."/>
            <person name="Holmes S.J."/>
            <person name="Howden P.J."/>
            <person name="Howe K.L."/>
            <person name="Howell G.R."/>
            <person name="Huckle E."/>
            <person name="Humphray S.J."/>
            <person name="Humphries M.D."/>
            <person name="Hunt A.R."/>
            <person name="Johnson C.M."/>
            <person name="Joy A.A."/>
            <person name="Kay M."/>
            <person name="Keenan S.J."/>
            <person name="Kimberley A.M."/>
            <person name="King A."/>
            <person name="Laird G.K."/>
            <person name="Langford C."/>
            <person name="Lawlor S."/>
            <person name="Leongamornlert D.A."/>
            <person name="Leversha M."/>
            <person name="Lloyd C.R."/>
            <person name="Lloyd D.M."/>
            <person name="Loveland J.E."/>
            <person name="Lovell J."/>
            <person name="Martin S."/>
            <person name="Mashreghi-Mohammadi M."/>
            <person name="Maslen G.L."/>
            <person name="Matthews L."/>
            <person name="McCann O.T."/>
            <person name="McLaren S.J."/>
            <person name="McLay K."/>
            <person name="McMurray A."/>
            <person name="Moore M.J.F."/>
            <person name="Mullikin J.C."/>
            <person name="Niblett D."/>
            <person name="Nickerson T."/>
            <person name="Novik K.L."/>
            <person name="Oliver K."/>
            <person name="Overton-Larty E.K."/>
            <person name="Parker A."/>
            <person name="Patel R."/>
            <person name="Pearce A.V."/>
            <person name="Peck A.I."/>
            <person name="Phillimore B.J.C.T."/>
            <person name="Phillips S."/>
            <person name="Plumb R.W."/>
            <person name="Porter K.M."/>
            <person name="Ramsey Y."/>
            <person name="Ranby S.A."/>
            <person name="Rice C.M."/>
            <person name="Ross M.T."/>
            <person name="Searle S.M."/>
            <person name="Sehra H.K."/>
            <person name="Sheridan E."/>
            <person name="Skuce C.D."/>
            <person name="Smith S."/>
            <person name="Smith M."/>
            <person name="Spraggon L."/>
            <person name="Squares S.L."/>
            <person name="Steward C.A."/>
            <person name="Sycamore N."/>
            <person name="Tamlyn-Hall G."/>
            <person name="Tester J."/>
            <person name="Theaker A.J."/>
            <person name="Thomas D.W."/>
            <person name="Thorpe A."/>
            <person name="Tracey A."/>
            <person name="Tromans A."/>
            <person name="Tubby B."/>
            <person name="Wall M."/>
            <person name="Wallis J.M."/>
            <person name="West A.P."/>
            <person name="White S.S."/>
            <person name="Whitehead S.L."/>
            <person name="Whittaker H."/>
            <person name="Wild A."/>
            <person name="Willey D.J."/>
            <person name="Wilmer T.E."/>
            <person name="Wood J.M."/>
            <person name="Wray P.W."/>
            <person name="Wyatt J.C."/>
            <person name="Young L."/>
            <person name="Younger R.M."/>
            <person name="Bentley D.R."/>
            <person name="Coulson A."/>
            <person name="Durbin R.M."/>
            <person name="Hubbard T."/>
            <person name="Sulston J.E."/>
            <person name="Dunham I."/>
            <person name="Rogers J."/>
            <person name="Beck S."/>
        </authorList>
    </citation>
    <scope>NUCLEOTIDE SEQUENCE [LARGE SCALE GENOMIC DNA]</scope>
</reference>
<reference key="5">
    <citation type="submission" date="2005-09" db="EMBL/GenBank/DDBJ databases">
        <authorList>
            <person name="Mural R.J."/>
            <person name="Istrail S."/>
            <person name="Sutton G.G."/>
            <person name="Florea L."/>
            <person name="Halpern A.L."/>
            <person name="Mobarry C.M."/>
            <person name="Lippert R."/>
            <person name="Walenz B."/>
            <person name="Shatkay H."/>
            <person name="Dew I."/>
            <person name="Miller J.R."/>
            <person name="Flanigan M.J."/>
            <person name="Edwards N.J."/>
            <person name="Bolanos R."/>
            <person name="Fasulo D."/>
            <person name="Halldorsson B.V."/>
            <person name="Hannenhalli S."/>
            <person name="Turner R."/>
            <person name="Yooseph S."/>
            <person name="Lu F."/>
            <person name="Nusskern D.R."/>
            <person name="Shue B.C."/>
            <person name="Zheng X.H."/>
            <person name="Zhong F."/>
            <person name="Delcher A.L."/>
            <person name="Huson D.H."/>
            <person name="Kravitz S.A."/>
            <person name="Mouchard L."/>
            <person name="Reinert K."/>
            <person name="Remington K.A."/>
            <person name="Clark A.G."/>
            <person name="Waterman M.S."/>
            <person name="Eichler E.E."/>
            <person name="Adams M.D."/>
            <person name="Hunkapiller M.W."/>
            <person name="Myers E.W."/>
            <person name="Venter J.C."/>
        </authorList>
    </citation>
    <scope>NUCLEOTIDE SEQUENCE [LARGE SCALE GENOMIC DNA]</scope>
</reference>
<reference key="6">
    <citation type="journal article" date="2004" name="Genome Res.">
        <title>The status, quality, and expansion of the NIH full-length cDNA project: the Mammalian Gene Collection (MGC).</title>
        <authorList>
            <consortium name="The MGC Project Team"/>
        </authorList>
    </citation>
    <scope>NUCLEOTIDE SEQUENCE [LARGE SCALE MRNA]</scope>
    <source>
        <tissue>Brain</tissue>
    </source>
</reference>
<reference key="7">
    <citation type="journal article" date="2005" name="Hum. Mol. Genet.">
        <title>Linkage of familial hemophagocytic lymphohistiocytosis (FHL) type-4 to chromosome 6q24 and identification of mutations in syntaxin 11.</title>
        <authorList>
            <person name="zur Stadt U."/>
            <person name="Schmidt S."/>
            <person name="Kasper B."/>
            <person name="Beutel K."/>
            <person name="Diler A.S."/>
            <person name="Henter J.-I."/>
            <person name="Kabisch H."/>
            <person name="Schneppenheim R."/>
            <person name="Nuernberg P."/>
            <person name="Janka G."/>
            <person name="Hennies H.C."/>
        </authorList>
    </citation>
    <scope>INVOLVEMENT IN FHL4</scope>
</reference>
<reference key="8">
    <citation type="journal article" date="2015" name="Proteomics">
        <title>N-terminome analysis of the human mitochondrial proteome.</title>
        <authorList>
            <person name="Vaca Jacome A.S."/>
            <person name="Rabilloud T."/>
            <person name="Schaeffer-Reiss C."/>
            <person name="Rompais M."/>
            <person name="Ayoub D."/>
            <person name="Lane L."/>
            <person name="Bairoch A."/>
            <person name="Van Dorsselaer A."/>
            <person name="Carapito C."/>
        </authorList>
    </citation>
    <scope>IDENTIFICATION BY MASS SPECTROMETRY [LARGE SCALE ANALYSIS]</scope>
</reference>
<accession>O75558</accession>
<accession>E1P598</accession>
<accession>O75378</accession>
<accession>O95148</accession>
<accession>Q5TCL6</accession>
<keyword id="KW-0175">Coiled coil</keyword>
<keyword id="KW-0951">Familial hemophagocytic lymphohistiocytosis</keyword>
<keyword id="KW-0333">Golgi apparatus</keyword>
<keyword id="KW-0472">Membrane</keyword>
<keyword id="KW-0653">Protein transport</keyword>
<keyword id="KW-1267">Proteomics identification</keyword>
<keyword id="KW-1185">Reference proteome</keyword>
<keyword id="KW-0813">Transport</keyword>
<gene>
    <name type="primary">STX11</name>
</gene>
<feature type="chain" id="PRO_0000210221" description="Syntaxin-11">
    <location>
        <begin position="1"/>
        <end position="287"/>
    </location>
</feature>
<feature type="domain" description="t-SNARE coiled-coil homology" evidence="3">
    <location>
        <begin position="204"/>
        <end position="266"/>
    </location>
</feature>
<feature type="coiled-coil region" evidence="2">
    <location>
        <begin position="41"/>
        <end position="71"/>
    </location>
</feature>
<feature type="sequence variant" id="VAR_011995" description="In dbSNP:rs1802414.">
    <original>E</original>
    <variation>Q</variation>
    <location>
        <position position="31"/>
    </location>
</feature>
<feature type="sequence variant" id="VAR_029769" description="In dbSNP:rs17073498.">
    <original>R</original>
    <variation>Q</variation>
    <location>
        <position position="49"/>
    </location>
</feature>
<feature type="sequence variant" id="VAR_011996" description="In dbSNP:rs1133248.">
    <original>L</original>
    <variation>H</variation>
    <location>
        <position position="204"/>
    </location>
</feature>
<feature type="sequence variant" id="VAR_029770" description="In dbSNP:rs9496891.">
    <original>T</original>
    <variation>A</variation>
    <location>
        <position position="277"/>
    </location>
</feature>
<feature type="sequence conflict" description="In Ref. 1; AAD02107." evidence="5" ref="1">
    <original>D</original>
    <variation>N</variation>
    <location>
        <position position="61"/>
    </location>
</feature>
<feature type="sequence conflict" description="In Ref. 2; AAC24031." evidence="5" ref="2">
    <original>IK</original>
    <variation>FR</variation>
    <location>
        <begin position="93"/>
        <end position="94"/>
    </location>
</feature>
<feature type="sequence conflict" description="In Ref. 1; AAD02107." evidence="5" ref="1">
    <original>RG</original>
    <variation>PP</variation>
    <location>
        <begin position="96"/>
        <end position="97"/>
    </location>
</feature>
<feature type="sequence conflict" description="In Ref. 1; AAD02107." evidence="5" ref="1">
    <original>KL</original>
    <variation>NV</variation>
    <location>
        <begin position="103"/>
        <end position="104"/>
    </location>
</feature>
<feature type="sequence conflict" description="In Ref. 1; AAD02107." evidence="5" ref="1">
    <original>HSAVAR</original>
    <variation>ALGSGG</variation>
    <location>
        <begin position="121"/>
        <end position="126"/>
    </location>
</feature>
<feature type="sequence conflict" description="In Ref. 2; AAC24031." evidence="5" ref="2">
    <original>ARAALNEIESRHRELLRLESR</original>
    <variation>RGPPTTRSRAATANCCAWRAA</variation>
    <location>
        <begin position="200"/>
        <end position="220"/>
    </location>
</feature>
<feature type="sequence conflict" description="In Ref. 1; AAD02107." evidence="5" ref="1">
    <original>A</original>
    <variation>V</variation>
    <location>
        <position position="200"/>
    </location>
</feature>
<feature type="sequence conflict" description="In Ref. 1; AAD02107." evidence="5" ref="1">
    <original>L</original>
    <variation>V</variation>
    <location>
        <position position="215"/>
    </location>
</feature>
<feature type="sequence conflict" description="In Ref. 1; AAD02107." evidence="5" ref="1">
    <original>R</original>
    <variation>A</variation>
    <location>
        <position position="220"/>
    </location>
</feature>
<protein>
    <recommendedName>
        <fullName>Syntaxin-11</fullName>
    </recommendedName>
</protein>
<name>STX11_HUMAN</name>
<sequence length="287" mass="33196">MKDRLAELLDLSKQYDQQFPDGDDEFDSPHEDIVFETDHILESLYRDIRDIQDENQLLVADVKRLGKQNARFLTSMRRLSSIKRDTNSIAKAIKARGEVIHCKLRAMKELSEAAEAQHGPHSAVARISRAQYNALTLTFQRAMHDYNQAEMKQRDNCKIRIQRQLEIMGKEVSGDQIEDMFEQGKWDVFSENLLADVKGARAALNEIESRHRELLRLESRIRDVHELFLQMAVLVEKQADTLNVIELNVQKTVDYTGQAKAQVRKAVQYEEKNPCRTLCCFCCPCLK</sequence>
<comment type="function">
    <text>SNARE that acts to regulate protein transport between late endosomes and the trans-Golgi network.</text>
</comment>
<comment type="subunit">
    <text>Interacts with the SNARE proteins SNAP-23 and VAMP.</text>
</comment>
<comment type="interaction">
    <interactant intactId="EBI-714135">
        <id>O75558</id>
    </interactant>
    <interactant intactId="EBI-640741">
        <id>P01023</id>
        <label>A2M</label>
    </interactant>
    <organismsDiffer>false</organismsDiffer>
    <experiments>3</experiments>
</comment>
<comment type="interaction">
    <interactant intactId="EBI-714135">
        <id>O75558</id>
    </interactant>
    <interactant intactId="EBI-8643161">
        <id>Q9NX04</id>
        <label>AIRIM</label>
    </interactant>
    <organismsDiffer>false</organismsDiffer>
    <experiments>6</experiments>
</comment>
<comment type="interaction">
    <interactant intactId="EBI-714135">
        <id>O75558</id>
    </interactant>
    <interactant intactId="EBI-11954292">
        <id>Q86V38</id>
        <label>ATN1</label>
    </interactant>
    <organismsDiffer>false</organismsDiffer>
    <experiments>3</experiments>
</comment>
<comment type="interaction">
    <interactant intactId="EBI-714135">
        <id>O75558</id>
    </interactant>
    <interactant intactId="EBI-16429430">
        <id>A0A0S2Z4M1</id>
        <label>AXIN1</label>
    </interactant>
    <organismsDiffer>false</organismsDiffer>
    <experiments>3</experiments>
</comment>
<comment type="interaction">
    <interactant intactId="EBI-714135">
        <id>O75558</id>
    </interactant>
    <interactant intactId="EBI-710484">
        <id>O15169</id>
        <label>AXIN1</label>
    </interactant>
    <organismsDiffer>false</organismsDiffer>
    <experiments>3</experiments>
</comment>
<comment type="interaction">
    <interactant intactId="EBI-714135">
        <id>O75558</id>
    </interactant>
    <interactant intactId="EBI-4400025">
        <id>Q9Y2T1</id>
        <label>AXIN2</label>
    </interactant>
    <organismsDiffer>false</organismsDiffer>
    <experiments>3</experiments>
</comment>
<comment type="interaction">
    <interactant intactId="EBI-714135">
        <id>O75558</id>
    </interactant>
    <interactant intactId="EBI-11282723">
        <id>Q9Y5Z0</id>
        <label>BACE2</label>
    </interactant>
    <organismsDiffer>false</organismsDiffer>
    <experiments>3</experiments>
</comment>
<comment type="interaction">
    <interactant intactId="EBI-714135">
        <id>O75558</id>
    </interactant>
    <interactant intactId="EBI-465781">
        <id>Q9UL45</id>
        <label>BLOC1S6</label>
    </interactant>
    <organismsDiffer>false</organismsDiffer>
    <experiments>6</experiments>
</comment>
<comment type="interaction">
    <interactant intactId="EBI-714135">
        <id>O75558</id>
    </interactant>
    <interactant intactId="EBI-358049">
        <id>Q13895</id>
        <label>BYSL</label>
    </interactant>
    <organismsDiffer>false</organismsDiffer>
    <experiments>8</experiments>
</comment>
<comment type="interaction">
    <interactant intactId="EBI-714135">
        <id>O75558</id>
    </interactant>
    <interactant intactId="EBI-751319">
        <id>Q9H257</id>
        <label>CARD9</label>
    </interactant>
    <organismsDiffer>false</organismsDiffer>
    <experiments>3</experiments>
</comment>
<comment type="interaction">
    <interactant intactId="EBI-714135">
        <id>O75558</id>
    </interactant>
    <interactant intactId="EBI-3923278">
        <id>Q6UXH8</id>
        <label>CCBE1</label>
    </interactant>
    <organismsDiffer>false</organismsDiffer>
    <experiments>3</experiments>
</comment>
<comment type="interaction">
    <interactant intactId="EBI-714135">
        <id>O75558</id>
    </interactant>
    <interactant intactId="EBI-744556">
        <id>Q96HB5</id>
        <label>CCDC120</label>
    </interactant>
    <organismsDiffer>false</organismsDiffer>
    <experiments>3</experiments>
</comment>
<comment type="interaction">
    <interactant intactId="EBI-714135">
        <id>O75558</id>
    </interactant>
    <interactant intactId="EBI-11977221">
        <id>Q86Z20</id>
        <label>CCDC125</label>
    </interactant>
    <organismsDiffer>false</organismsDiffer>
    <experiments>3</experiments>
</comment>
<comment type="interaction">
    <interactant intactId="EBI-714135">
        <id>O75558</id>
    </interactant>
    <interactant intactId="EBI-10179526">
        <id>Q52MB2</id>
        <label>CCDC184</label>
    </interactant>
    <organismsDiffer>false</organismsDiffer>
    <experiments>6</experiments>
</comment>
<comment type="interaction">
    <interactant intactId="EBI-714135">
        <id>O75558</id>
    </interactant>
    <interactant intactId="EBI-10181422">
        <id>A0A1B0GWI1</id>
        <label>CCDC196</label>
    </interactant>
    <organismsDiffer>false</organismsDiffer>
    <experiments>3</experiments>
</comment>
<comment type="interaction">
    <interactant intactId="EBI-714135">
        <id>O75558</id>
    </interactant>
    <interactant intactId="EBI-10175300">
        <id>Q8TD31-3</id>
        <label>CCHCR1</label>
    </interactant>
    <organismsDiffer>false</organismsDiffer>
    <experiments>3</experiments>
</comment>
<comment type="interaction">
    <interactant intactId="EBI-714135">
        <id>O75558</id>
    </interactant>
    <interactant intactId="EBI-5278764">
        <id>Q96GN5</id>
        <label>CDCA7L</label>
    </interactant>
    <organismsDiffer>false</organismsDiffer>
    <experiments>3</experiments>
</comment>
<comment type="interaction">
    <interactant intactId="EBI-714135">
        <id>O75558</id>
    </interactant>
    <interactant intactId="EBI-11063830">
        <id>Q86X02</id>
        <label>CDR2L</label>
    </interactant>
    <organismsDiffer>false</organismsDiffer>
    <experiments>3</experiments>
</comment>
<comment type="interaction">
    <interactant intactId="EBI-714135">
        <id>O75558</id>
    </interactant>
    <interactant intactId="EBI-21553822">
        <id>Q96A83-2</id>
        <label>COL26A1</label>
    </interactant>
    <organismsDiffer>false</organismsDiffer>
    <experiments>3</experiments>
</comment>
<comment type="interaction">
    <interactant intactId="EBI-714135">
        <id>O75558</id>
    </interactant>
    <interactant intactId="EBI-6875961">
        <id>P02489</id>
        <label>CRYAA</label>
    </interactant>
    <organismsDiffer>false</organismsDiffer>
    <experiments>3</experiments>
</comment>
<comment type="interaction">
    <interactant intactId="EBI-714135">
        <id>O75558</id>
    </interactant>
    <interactant intactId="EBI-7519711">
        <id>P53673</id>
        <label>CRYBA4</label>
    </interactant>
    <organismsDiffer>false</organismsDiffer>
    <experiments>3</experiments>
</comment>
<comment type="interaction">
    <interactant intactId="EBI-714135">
        <id>O75558</id>
    </interactant>
    <interactant intactId="EBI-5453285">
        <id>Q2TBE0</id>
        <label>CWF19L2</label>
    </interactant>
    <organismsDiffer>false</organismsDiffer>
    <experiments>3</experiments>
</comment>
<comment type="interaction">
    <interactant intactId="EBI-714135">
        <id>O75558</id>
    </interactant>
    <interactant intactId="EBI-11988027">
        <id>Q9NRI5-2</id>
        <label>DISC1</label>
    </interactant>
    <organismsDiffer>false</organismsDiffer>
    <experiments>4</experiments>
</comment>
<comment type="interaction">
    <interactant intactId="EBI-714135">
        <id>O75558</id>
    </interactant>
    <interactant intactId="EBI-12593112">
        <id>O75190-2</id>
        <label>DNAJB6</label>
    </interactant>
    <organismsDiffer>false</organismsDiffer>
    <experiments>3</experiments>
</comment>
<comment type="interaction">
    <interactant intactId="EBI-714135">
        <id>O75558</id>
    </interactant>
    <interactant intactId="EBI-10968534">
        <id>P50570-2</id>
        <label>DNM2</label>
    </interactant>
    <organismsDiffer>false</organismsDiffer>
    <experiments>3</experiments>
</comment>
<comment type="interaction">
    <interactant intactId="EBI-714135">
        <id>O75558</id>
    </interactant>
    <interactant intactId="EBI-1054321">
        <id>Q68J44</id>
        <label>DUSP29</label>
    </interactant>
    <organismsDiffer>false</organismsDiffer>
    <experiments>3</experiments>
</comment>
<comment type="interaction">
    <interactant intactId="EBI-714135">
        <id>O75558</id>
    </interactant>
    <interactant intactId="EBI-750700">
        <id>Q8N9N8</id>
        <label>EIF1AD</label>
    </interactant>
    <organismsDiffer>false</organismsDiffer>
    <experiments>6</experiments>
</comment>
<comment type="interaction">
    <interactant intactId="EBI-714135">
        <id>O75558</id>
    </interactant>
    <interactant intactId="EBI-4401110">
        <id>Q13144</id>
        <label>EIF2B5</label>
    </interactant>
    <organismsDiffer>false</organismsDiffer>
    <experiments>4</experiments>
</comment>
<comment type="interaction">
    <interactant intactId="EBI-714135">
        <id>O75558</id>
    </interactant>
    <interactant intactId="EBI-1752811">
        <id>Q9BQ89</id>
        <label>FAM110A</label>
    </interactant>
    <organismsDiffer>false</organismsDiffer>
    <experiments>3</experiments>
</comment>
<comment type="interaction">
    <interactant intactId="EBI-714135">
        <id>O75558</id>
    </interactant>
    <interactant intactId="EBI-719941">
        <id>Q3B820</id>
        <label>FAM161A</label>
    </interactant>
    <organismsDiffer>false</organismsDiffer>
    <experiments>3</experiments>
</comment>
<comment type="interaction">
    <interactant intactId="EBI-714135">
        <id>O75558</id>
    </interactant>
    <interactant intactId="EBI-7225287">
        <id>Q96MY7</id>
        <label>FAM161B</label>
    </interactant>
    <organismsDiffer>false</organismsDiffer>
    <experiments>3</experiments>
</comment>
<comment type="interaction">
    <interactant intactId="EBI-714135">
        <id>O75558</id>
    </interactant>
    <interactant intactId="EBI-6658203">
        <id>Q86YD7</id>
        <label>FAM90A1</label>
    </interactant>
    <organismsDiffer>false</organismsDiffer>
    <experiments>3</experiments>
</comment>
<comment type="interaction">
    <interactant intactId="EBI-714135">
        <id>O75558</id>
    </interactant>
    <interactant intactId="EBI-2513774">
        <id>O95363</id>
        <label>FARS2</label>
    </interactant>
    <organismsDiffer>false</organismsDiffer>
    <experiments>3</experiments>
</comment>
<comment type="interaction">
    <interactant intactId="EBI-714135">
        <id>O75558</id>
    </interactant>
    <interactant intactId="EBI-25913156">
        <id>O14908-2</id>
        <label>GIPC1</label>
    </interactant>
    <organismsDiffer>false</organismsDiffer>
    <experiments>3</experiments>
</comment>
<comment type="interaction">
    <interactant intactId="EBI-714135">
        <id>O75558</id>
    </interactant>
    <interactant intactId="EBI-1955541">
        <id>Q53GS7</id>
        <label>GLE1</label>
    </interactant>
    <organismsDiffer>false</organismsDiffer>
    <experiments>3</experiments>
</comment>
<comment type="interaction">
    <interactant intactId="EBI-714135">
        <id>O75558</id>
    </interactant>
    <interactant intactId="EBI-10181276">
        <id>Q0D2H9</id>
        <label>GOLGA8DP</label>
    </interactant>
    <organismsDiffer>false</organismsDiffer>
    <experiments>3</experiments>
</comment>
<comment type="interaction">
    <interactant intactId="EBI-714135">
        <id>O75558</id>
    </interactant>
    <interactant intactId="EBI-10181260">
        <id>Q08AF8</id>
        <label>GOLGA8G</label>
    </interactant>
    <organismsDiffer>false</organismsDiffer>
    <experiments>3</experiments>
</comment>
<comment type="interaction">
    <interactant intactId="EBI-714135">
        <id>O75558</id>
    </interactant>
    <interactant intactId="EBI-2514791">
        <id>Q96CS2</id>
        <label>HAUS1</label>
    </interactant>
    <organismsDiffer>false</organismsDiffer>
    <experiments>3</experiments>
</comment>
<comment type="interaction">
    <interactant intactId="EBI-714135">
        <id>O75558</id>
    </interactant>
    <interactant intactId="EBI-740220">
        <id>O14964</id>
        <label>HGS</label>
    </interactant>
    <organismsDiffer>false</organismsDiffer>
    <experiments>3</experiments>
</comment>
<comment type="interaction">
    <interactant intactId="EBI-714135">
        <id>O75558</id>
    </interactant>
    <interactant intactId="EBI-740785">
        <id>P49639</id>
        <label>HOXA1</label>
    </interactant>
    <organismsDiffer>false</organismsDiffer>
    <experiments>3</experiments>
</comment>
<comment type="interaction">
    <interactant intactId="EBI-714135">
        <id>O75558</id>
    </interactant>
    <interactant intactId="EBI-747204">
        <id>Q9UKT9</id>
        <label>IKZF3</label>
    </interactant>
    <organismsDiffer>false</organismsDiffer>
    <experiments>3</experiments>
</comment>
<comment type="interaction">
    <interactant intactId="EBI-714135">
        <id>O75558</id>
    </interactant>
    <interactant intactId="EBI-399080">
        <id>Q92993</id>
        <label>KAT5</label>
    </interactant>
    <organismsDiffer>false</organismsDiffer>
    <experiments>6</experiments>
</comment>
<comment type="interaction">
    <interactant intactId="EBI-714135">
        <id>O75558</id>
    </interactant>
    <interactant intactId="EBI-4397613">
        <id>Q7L273</id>
        <label>KCTD9</label>
    </interactant>
    <organismsDiffer>false</organismsDiffer>
    <experiments>3</experiments>
</comment>
<comment type="interaction">
    <interactant intactId="EBI-714135">
        <id>O75558</id>
    </interactant>
    <interactant intactId="EBI-14069005">
        <id>Q9BVG8-5</id>
        <label>KIFC3</label>
    </interactant>
    <organismsDiffer>false</organismsDiffer>
    <experiments>7</experiments>
</comment>
<comment type="interaction">
    <interactant intactId="EBI-714135">
        <id>O75558</id>
    </interactant>
    <interactant intactId="EBI-1643885">
        <id>Q6P597</id>
        <label>KLC3</label>
    </interactant>
    <organismsDiffer>false</organismsDiffer>
    <experiments>3</experiments>
</comment>
<comment type="interaction">
    <interactant intactId="EBI-714135">
        <id>O75558</id>
    </interactant>
    <interactant intactId="EBI-948266">
        <id>O14901</id>
        <label>KLF11</label>
    </interactant>
    <organismsDiffer>false</organismsDiffer>
    <experiments>3</experiments>
</comment>
<comment type="interaction">
    <interactant intactId="EBI-714135">
        <id>O75558</id>
    </interactant>
    <interactant intactId="EBI-2432309">
        <id>Q92876</id>
        <label>KLK6</label>
    </interactant>
    <organismsDiffer>false</organismsDiffer>
    <experiments>3</experiments>
</comment>
<comment type="interaction">
    <interactant intactId="EBI-714135">
        <id>O75558</id>
    </interactant>
    <interactant intactId="EBI-2949715">
        <id>O95678</id>
        <label>KRT75</label>
    </interactant>
    <organismsDiffer>false</organismsDiffer>
    <experiments>3</experiments>
</comment>
<comment type="interaction">
    <interactant intactId="EBI-714135">
        <id>O75558</id>
    </interactant>
    <interactant intactId="EBI-726510">
        <id>Q96BZ8</id>
        <label>LENG1</label>
    </interactant>
    <organismsDiffer>false</organismsDiffer>
    <experiments>3</experiments>
</comment>
<comment type="interaction">
    <interactant intactId="EBI-714135">
        <id>O75558</id>
    </interactant>
    <interactant intactId="EBI-2341787">
        <id>Q17RB8</id>
        <label>LONRF1</label>
    </interactant>
    <organismsDiffer>false</organismsDiffer>
    <experiments>3</experiments>
</comment>
<comment type="interaction">
    <interactant intactId="EBI-714135">
        <id>O75558</id>
    </interactant>
    <interactant intactId="EBI-746778">
        <id>Q96A72</id>
        <label>MAGOHB</label>
    </interactant>
    <organismsDiffer>false</organismsDiffer>
    <experiments>3</experiments>
</comment>
<comment type="interaction">
    <interactant intactId="EBI-714135">
        <id>O75558</id>
    </interactant>
    <interactant intactId="EBI-12516603">
        <id>Q8WWY6</id>
        <label>MBD3L1</label>
    </interactant>
    <organismsDiffer>false</organismsDiffer>
    <experiments>3</experiments>
</comment>
<comment type="interaction">
    <interactant intactId="EBI-714135">
        <id>O75558</id>
    </interactant>
    <interactant intactId="EBI-10182361">
        <id>Q9NS73-5</id>
        <label>MBIP</label>
    </interactant>
    <organismsDiffer>false</organismsDiffer>
    <experiments>3</experiments>
</comment>
<comment type="interaction">
    <interactant intactId="EBI-714135">
        <id>O75558</id>
    </interactant>
    <interactant intactId="EBI-1189067">
        <id>P51608</id>
        <label>MECP2</label>
    </interactant>
    <organismsDiffer>false</organismsDiffer>
    <experiments>3</experiments>
</comment>
<comment type="interaction">
    <interactant intactId="EBI-714135">
        <id>O75558</id>
    </interactant>
    <interactant intactId="EBI-748397">
        <id>P50222</id>
        <label>MEOX2</label>
    </interactant>
    <organismsDiffer>false</organismsDiffer>
    <experiments>3</experiments>
</comment>
<comment type="interaction">
    <interactant intactId="EBI-714135">
        <id>O75558</id>
    </interactant>
    <interactant intactId="EBI-1048159">
        <id>P55081</id>
        <label>MFAP1</label>
    </interactant>
    <organismsDiffer>false</organismsDiffer>
    <experiments>3</experiments>
</comment>
<comment type="interaction">
    <interactant intactId="EBI-714135">
        <id>O75558</id>
    </interactant>
    <interactant intactId="EBI-10172526">
        <id>Q9UJV3-2</id>
        <label>MID2</label>
    </interactant>
    <organismsDiffer>false</organismsDiffer>
    <experiments>3</experiments>
</comment>
<comment type="interaction">
    <interactant intactId="EBI-714135">
        <id>O75558</id>
    </interactant>
    <interactant intactId="EBI-1104552">
        <id>Q9NYP9</id>
        <label>MIS18A</label>
    </interactant>
    <organismsDiffer>false</organismsDiffer>
    <experiments>3</experiments>
</comment>
<comment type="interaction">
    <interactant intactId="EBI-714135">
        <id>O75558</id>
    </interactant>
    <interactant intactId="EBI-14083835">
        <id>O94964-4</id>
        <label>MTCL2</label>
    </interactant>
    <organismsDiffer>false</organismsDiffer>
    <experiments>3</experiments>
</comment>
<comment type="interaction">
    <interactant intactId="EBI-714135">
        <id>O75558</id>
    </interactant>
    <interactant intactId="EBI-715849">
        <id>O14777</id>
        <label>NDC80</label>
    </interactant>
    <organismsDiffer>false</organismsDiffer>
    <experiments>3</experiments>
</comment>
<comment type="interaction">
    <interactant intactId="EBI-714135">
        <id>O75558</id>
    </interactant>
    <interactant intactId="EBI-741158">
        <id>Q96HA8</id>
        <label>NTAQ1</label>
    </interactant>
    <organismsDiffer>false</organismsDiffer>
    <experiments>3</experiments>
</comment>
<comment type="interaction">
    <interactant intactId="EBI-714135">
        <id>O75558</id>
    </interactant>
    <interactant intactId="EBI-1307">
        <id>Q13153</id>
        <label>PAK1</label>
    </interactant>
    <organismsDiffer>false</organismsDiffer>
    <experiments>3</experiments>
</comment>
<comment type="interaction">
    <interactant intactId="EBI-714135">
        <id>O75558</id>
    </interactant>
    <interactant intactId="EBI-602382">
        <id>Q16512</id>
        <label>PKN1</label>
    </interactant>
    <organismsDiffer>false</organismsDiffer>
    <experiments>3</experiments>
</comment>
<comment type="interaction">
    <interactant intactId="EBI-714135">
        <id>O75558</id>
    </interactant>
    <interactant intactId="EBI-50433196">
        <id>A0A6Q8PF08</id>
        <label>PMP22</label>
    </interactant>
    <organismsDiffer>false</organismsDiffer>
    <experiments>3</experiments>
</comment>
<comment type="interaction">
    <interactant intactId="EBI-714135">
        <id>O75558</id>
    </interactant>
    <interactant intactId="EBI-2557469">
        <id>Q6NYC8</id>
        <label>PPP1R18</label>
    </interactant>
    <organismsDiffer>false</organismsDiffer>
    <experiments>6</experiments>
</comment>
<comment type="interaction">
    <interactant intactId="EBI-714135">
        <id>O75558</id>
    </interactant>
    <interactant intactId="EBI-1053424">
        <id>O43741</id>
        <label>PRKAB2</label>
    </interactant>
    <organismsDiffer>false</organismsDiffer>
    <experiments>4</experiments>
</comment>
<comment type="interaction">
    <interactant intactId="EBI-714135">
        <id>O75558</id>
    </interactant>
    <interactant intactId="EBI-2798416">
        <id>Q99633</id>
        <label>PRPF18</label>
    </interactant>
    <organismsDiffer>false</organismsDiffer>
    <experiments>3</experiments>
</comment>
<comment type="interaction">
    <interactant intactId="EBI-714135">
        <id>O75558</id>
    </interactant>
    <interactant intactId="EBI-1567797">
        <id>Q8WWY3</id>
        <label>PRPF31</label>
    </interactant>
    <organismsDiffer>false</organismsDiffer>
    <experiments>6</experiments>
</comment>
<comment type="interaction">
    <interactant intactId="EBI-714135">
        <id>O75558</id>
    </interactant>
    <interactant intactId="EBI-1055693">
        <id>O75771</id>
        <label>RAD51D</label>
    </interactant>
    <organismsDiffer>false</organismsDiffer>
    <experiments>3</experiments>
</comment>
<comment type="interaction">
    <interactant intactId="EBI-714135">
        <id>O75558</id>
    </interactant>
    <interactant intactId="EBI-16428950">
        <id>A0A0S2Z4G9</id>
        <label>RNF6</label>
    </interactant>
    <organismsDiffer>false</organismsDiffer>
    <experiments>3</experiments>
</comment>
<comment type="interaction">
    <interactant intactId="EBI-714135">
        <id>O75558</id>
    </interactant>
    <interactant intactId="EBI-373337">
        <id>O76064</id>
        <label>RNF8</label>
    </interactant>
    <organismsDiffer>false</organismsDiffer>
    <experiments>6</experiments>
</comment>
<comment type="interaction">
    <interactant intactId="EBI-714135">
        <id>O75558</id>
    </interactant>
    <interactant intactId="EBI-395959">
        <id>Q15287</id>
        <label>RNPS1</label>
    </interactant>
    <organismsDiffer>false</organismsDiffer>
    <experiments>3</experiments>
</comment>
<comment type="interaction">
    <interactant intactId="EBI-714135">
        <id>O75558</id>
    </interactant>
    <interactant intactId="EBI-10224192">
        <id>Q06455-4</id>
        <label>RUNX1T1</label>
    </interactant>
    <organismsDiffer>false</organismsDiffer>
    <experiments>3</experiments>
</comment>
<comment type="interaction">
    <interactant intactId="EBI-714135">
        <id>O75558</id>
    </interactant>
    <interactant intactId="EBI-748391">
        <id>Q9BWG6</id>
        <label>SCNM1</label>
    </interactant>
    <organismsDiffer>false</organismsDiffer>
    <experiments>5</experiments>
</comment>
<comment type="interaction">
    <interactant intactId="EBI-714135">
        <id>O75558</id>
    </interactant>
    <interactant intactId="EBI-747035">
        <id>Q9H788</id>
        <label>SH2D4A</label>
    </interactant>
    <organismsDiffer>false</organismsDiffer>
    <experiments>3</experiments>
</comment>
<comment type="interaction">
    <interactant intactId="EBI-714135">
        <id>O75558</id>
    </interactant>
    <interactant intactId="EBI-79084">
        <id>Q92529</id>
        <label>SHC3</label>
    </interactant>
    <organismsDiffer>false</organismsDiffer>
    <experiments>3</experiments>
</comment>
<comment type="interaction">
    <interactant intactId="EBI-714135">
        <id>O75558</id>
    </interactant>
    <interactant intactId="EBI-1773646">
        <id>Q9BRV8</id>
        <label>SIKE1</label>
    </interactant>
    <organismsDiffer>false</organismsDiffer>
    <experiments>4</experiments>
</comment>
<comment type="interaction">
    <interactant intactId="EBI-714135">
        <id>O75558</id>
    </interactant>
    <interactant intactId="EBI-455078">
        <id>Q969G3</id>
        <label>SMARCE1</label>
    </interactant>
    <organismsDiffer>false</organismsDiffer>
    <experiments>3</experiments>
</comment>
<comment type="interaction">
    <interactant intactId="EBI-714135">
        <id>O75558</id>
    </interactant>
    <interactant intactId="EBI-10188497">
        <id>A8K287</id>
        <label>SNAP23</label>
    </interactant>
    <organismsDiffer>false</organismsDiffer>
    <experiments>3</experiments>
</comment>
<comment type="interaction">
    <interactant intactId="EBI-714135">
        <id>O75558</id>
    </interactant>
    <interactant intactId="EBI-745000">
        <id>O00161</id>
        <label>SNAP23</label>
    </interactant>
    <organismsDiffer>false</organismsDiffer>
    <experiments>11</experiments>
</comment>
<comment type="interaction">
    <interactant intactId="EBI-714135">
        <id>O75558</id>
    </interactant>
    <interactant intactId="EBI-12177361">
        <id>P60880-2</id>
        <label>SNAP25</label>
    </interactant>
    <organismsDiffer>false</organismsDiffer>
    <experiments>3</experiments>
</comment>
<comment type="interaction">
    <interactant intactId="EBI-714135">
        <id>O75558</id>
    </interactant>
    <interactant intactId="EBI-5235340">
        <id>Q7Z699</id>
        <label>SPRED1</label>
    </interactant>
    <organismsDiffer>false</organismsDiffer>
    <experiments>3</experiments>
</comment>
<comment type="interaction">
    <interactant intactId="EBI-714135">
        <id>O75558</id>
    </interactant>
    <interactant intactId="EBI-712466">
        <id>Q16623</id>
        <label>STX1A</label>
    </interactant>
    <organismsDiffer>false</organismsDiffer>
    <experiments>3</experiments>
</comment>
<comment type="interaction">
    <interactant intactId="EBI-714135">
        <id>O75558</id>
    </interactant>
    <interactant intactId="EBI-744942">
        <id>Q12846</id>
        <label>STX4</label>
    </interactant>
    <organismsDiffer>false</organismsDiffer>
    <experiments>3</experiments>
</comment>
<comment type="interaction">
    <interactant intactId="EBI-714135">
        <id>O75558</id>
    </interactant>
    <interactant intactId="EBI-960169">
        <id>P61764</id>
        <label>STXBP1</label>
    </interactant>
    <organismsDiffer>false</organismsDiffer>
    <experiments>8</experiments>
</comment>
<comment type="interaction">
    <interactant intactId="EBI-714135">
        <id>O75558</id>
    </interactant>
    <interactant intactId="EBI-4401015">
        <id>Q15833</id>
        <label>STXBP2</label>
    </interactant>
    <organismsDiffer>false</organismsDiffer>
    <experiments>6</experiments>
</comment>
<comment type="interaction">
    <interactant intactId="EBI-714135">
        <id>O75558</id>
    </interactant>
    <interactant intactId="EBI-473249">
        <id>O75528</id>
        <label>TADA3</label>
    </interactant>
    <organismsDiffer>false</organismsDiffer>
    <experiments>3</experiments>
</comment>
<comment type="interaction">
    <interactant intactId="EBI-714135">
        <id>O75558</id>
    </interactant>
    <interactant intactId="EBI-356402">
        <id>Q9UHD2</id>
        <label>TBK1</label>
    </interactant>
    <organismsDiffer>false</organismsDiffer>
    <experiments>4</experiments>
</comment>
<comment type="interaction">
    <interactant intactId="EBI-714135">
        <id>O75558</id>
    </interactant>
    <interactant intactId="EBI-710310">
        <id>Q15560</id>
        <label>TCEA2</label>
    </interactant>
    <organismsDiffer>false</organismsDiffer>
    <experiments>3</experiments>
</comment>
<comment type="interaction">
    <interactant intactId="EBI-714135">
        <id>O75558</id>
    </interactant>
    <interactant intactId="EBI-533224">
        <id>P15884</id>
        <label>TCF4</label>
    </interactant>
    <organismsDiffer>false</organismsDiffer>
    <experiments>3</experiments>
</comment>
<comment type="interaction">
    <interactant intactId="EBI-714135">
        <id>O75558</id>
    </interactant>
    <interactant intactId="EBI-717810">
        <id>Q08117</id>
        <label>TLE5</label>
    </interactant>
    <organismsDiffer>false</organismsDiffer>
    <experiments>3</experiments>
</comment>
<comment type="interaction">
    <interactant intactId="EBI-714135">
        <id>O75558</id>
    </interactant>
    <interactant intactId="EBI-11741437">
        <id>Q08117-2</id>
        <label>TLE5</label>
    </interactant>
    <organismsDiffer>false</organismsDiffer>
    <experiments>3</experiments>
</comment>
<comment type="interaction">
    <interactant intactId="EBI-714135">
        <id>O75558</id>
    </interactant>
    <interactant intactId="EBI-25847109">
        <id>O14656-2</id>
        <label>TOR1A</label>
    </interactant>
    <organismsDiffer>false</organismsDiffer>
    <experiments>3</experiments>
</comment>
<comment type="interaction">
    <interactant intactId="EBI-714135">
        <id>O75558</id>
    </interactant>
    <interactant intactId="EBI-725997">
        <id>Q8WV44</id>
        <label>TRIM41</label>
    </interactant>
    <organismsDiffer>false</organismsDiffer>
    <experiments>3</experiments>
</comment>
<comment type="interaction">
    <interactant intactId="EBI-714135">
        <id>O75558</id>
    </interactant>
    <interactant intactId="EBI-10241197">
        <id>Q3SY00</id>
        <label>TSGA10IP</label>
    </interactant>
    <organismsDiffer>false</organismsDiffer>
    <experiments>3</experiments>
</comment>
<comment type="interaction">
    <interactant intactId="EBI-714135">
        <id>O75558</id>
    </interactant>
    <interactant intactId="EBI-7353612">
        <id>P57075-2</id>
        <label>UBASH3A</label>
    </interactant>
    <organismsDiffer>false</organismsDiffer>
    <experiments>3</experiments>
</comment>
<comment type="interaction">
    <interactant intactId="EBI-714135">
        <id>O75558</id>
    </interactant>
    <interactant intactId="EBI-739895">
        <id>Q8N6Y0</id>
        <label>USHBP1</label>
    </interactant>
    <organismsDiffer>false</organismsDiffer>
    <experiments>3</experiments>
</comment>
<comment type="interaction">
    <interactant intactId="EBI-714135">
        <id>O75558</id>
    </interactant>
    <interactant intactId="EBI-2799833">
        <id>Q8N1B4</id>
        <label>VPS52</label>
    </interactant>
    <organismsDiffer>false</organismsDiffer>
    <experiments>3</experiments>
</comment>
<comment type="interaction">
    <interactant intactId="EBI-714135">
        <id>O75558</id>
    </interactant>
    <interactant intactId="EBI-597063">
        <id>Q8TBK6</id>
        <label>ZCCHC10</label>
    </interactant>
    <organismsDiffer>false</organismsDiffer>
    <experiments>4</experiments>
</comment>
<comment type="interaction">
    <interactant intactId="EBI-714135">
        <id>O75558</id>
    </interactant>
    <interactant intactId="EBI-12884200">
        <id>P17023</id>
        <label>ZNF19</label>
    </interactant>
    <organismsDiffer>false</organismsDiffer>
    <experiments>3</experiments>
</comment>
<comment type="interaction">
    <interactant intactId="EBI-714135">
        <id>O75558</id>
    </interactant>
    <interactant intactId="EBI-740727">
        <id>Q8TAU3</id>
        <label>ZNF417</label>
    </interactant>
    <organismsDiffer>false</organismsDiffer>
    <experiments>6</experiments>
</comment>
<comment type="interaction">
    <interactant intactId="EBI-714135">
        <id>O75558</id>
    </interactant>
    <interactant intactId="EBI-6427977">
        <id>Q96SQ5</id>
        <label>ZNF587</label>
    </interactant>
    <organismsDiffer>false</organismsDiffer>
    <experiments>8</experiments>
</comment>
<comment type="subcellular location">
    <subcellularLocation>
        <location evidence="5">Membrane</location>
        <topology evidence="5">Peripheral membrane protein</topology>
    </subcellularLocation>
    <subcellularLocation>
        <location evidence="1">Golgi apparatus</location>
        <location evidence="1">trans-Golgi network membrane</location>
        <topology evidence="1">Peripheral membrane protein</topology>
    </subcellularLocation>
</comment>
<comment type="disease" evidence="4">
    <disease id="DI-01575">
        <name>Hemophagocytic lymphohistiocytosis, familial, 4</name>
        <acronym>FHL4</acronym>
        <description>A rare disorder characterized by immune dysregulation with hypercytokinemia, defective function of natural killer cell, and massive infiltration of several organs by activated lymphocytes and macrophages. The clinical features of the disease include fever, hepatosplenomegaly, cytopenia, and less frequently neurological abnormalities ranging from irritability and hypotonia to seizures, cranial nerve deficits and ataxia.</description>
        <dbReference type="MIM" id="603552"/>
    </disease>
    <text>The disease is caused by variants affecting the gene represented in this entry.</text>
</comment>
<comment type="similarity">
    <text evidence="5">Belongs to the syntaxin family.</text>
</comment>
<comment type="online information" name="STX11base">
    <link uri="https://databases.lovd.nl/shared/genes/STX11"/>
    <text>STX11 mutation db</text>
</comment>